<feature type="peptide" id="PRO_0000043533" description="Brevinin-1BYb">
    <location>
        <begin position="1"/>
        <end position="24"/>
    </location>
</feature>
<feature type="disulfide bond" evidence="1">
    <location>
        <begin position="18"/>
        <end position="24"/>
    </location>
</feature>
<proteinExistence type="evidence at protein level"/>
<dbReference type="GO" id="GO:0005576">
    <property type="term" value="C:extracellular region"/>
    <property type="evidence" value="ECO:0007669"/>
    <property type="project" value="UniProtKB-SubCell"/>
</dbReference>
<dbReference type="GO" id="GO:0042742">
    <property type="term" value="P:defense response to bacterium"/>
    <property type="evidence" value="ECO:0007669"/>
    <property type="project" value="UniProtKB-KW"/>
</dbReference>
<dbReference type="GO" id="GO:0050832">
    <property type="term" value="P:defense response to fungus"/>
    <property type="evidence" value="ECO:0007669"/>
    <property type="project" value="UniProtKB-KW"/>
</dbReference>
<dbReference type="GO" id="GO:0031640">
    <property type="term" value="P:killing of cells of another organism"/>
    <property type="evidence" value="ECO:0007669"/>
    <property type="project" value="UniProtKB-KW"/>
</dbReference>
<dbReference type="InterPro" id="IPR012520">
    <property type="entry name" value="Antimicrobial_frog_1"/>
</dbReference>
<dbReference type="Pfam" id="PF08018">
    <property type="entry name" value="Antimicrobial_1"/>
    <property type="match status" value="1"/>
</dbReference>
<protein>
    <recommendedName>
        <fullName>Brevinin-1BYb</fullName>
    </recommendedName>
</protein>
<accession>P84112</accession>
<name>BR1B_RANBO</name>
<reference evidence="2" key="1">
    <citation type="journal article" date="2003" name="J. Pept. Res.">
        <title>Isolation of peptides of the brevinin-1 family with potent candidacidal activity from the skin secretions of the frog Rana boylii.</title>
        <authorList>
            <person name="Conlon J.M."/>
            <person name="Sonnevend A."/>
            <person name="Patel M."/>
            <person name="Davidson C."/>
            <person name="Nielsen P.F."/>
            <person name="Pal T."/>
            <person name="Rollins-Smith L.A."/>
        </authorList>
    </citation>
    <scope>PROTEIN SEQUENCE</scope>
    <scope>FUNCTION</scope>
    <scope>MASS SPECTROMETRY</scope>
    <source>
        <tissue evidence="1">Skin secretion</tissue>
    </source>
</reference>
<comment type="function">
    <text evidence="1">Antibacterial activity against Gram-positive bacterium S.aureus and Gram-negative bacterium E.coli. Has moderate antifungal activity against C.albicans and strong hemolytic activity.</text>
</comment>
<comment type="subcellular location">
    <subcellularLocation>
        <location evidence="1">Secreted</location>
    </subcellularLocation>
</comment>
<comment type="tissue specificity">
    <text>Expressed by the skin glands.</text>
</comment>
<comment type="mass spectrometry"/>
<comment type="similarity">
    <text evidence="1">Belongs to the frog skin active peptide (FSAP) family. Brevinin subfamily.</text>
</comment>
<evidence type="ECO:0000269" key="1">
    <source>
    </source>
</evidence>
<evidence type="ECO:0000305" key="2"/>
<organism>
    <name type="scientific">Rana boylii</name>
    <name type="common">Foothill yellow-legged frog</name>
    <dbReference type="NCBI Taxonomy" id="160499"/>
    <lineage>
        <taxon>Eukaryota</taxon>
        <taxon>Metazoa</taxon>
        <taxon>Chordata</taxon>
        <taxon>Craniata</taxon>
        <taxon>Vertebrata</taxon>
        <taxon>Euteleostomi</taxon>
        <taxon>Amphibia</taxon>
        <taxon>Batrachia</taxon>
        <taxon>Anura</taxon>
        <taxon>Neobatrachia</taxon>
        <taxon>Ranoidea</taxon>
        <taxon>Ranidae</taxon>
        <taxon>Rana</taxon>
        <taxon>Rana</taxon>
    </lineage>
</organism>
<sequence>FLPILASLAAKLGPKLFCLVTKKC</sequence>
<keyword id="KW-0878">Amphibian defense peptide</keyword>
<keyword id="KW-0044">Antibiotic</keyword>
<keyword id="KW-0929">Antimicrobial</keyword>
<keyword id="KW-0204">Cytolysis</keyword>
<keyword id="KW-0903">Direct protein sequencing</keyword>
<keyword id="KW-1015">Disulfide bond</keyword>
<keyword id="KW-0295">Fungicide</keyword>
<keyword id="KW-0354">Hemolysis</keyword>
<keyword id="KW-0964">Secreted</keyword>